<accession>Q6GA87</accession>
<sequence length="57" mass="6485">MAVPKRRTSKTRKNKRRTHFKISVPGMTECPNCGEYKLSHRVCKNCGSYNGEEVAAK</sequence>
<proteinExistence type="inferred from homology"/>
<reference key="1">
    <citation type="journal article" date="2004" name="Proc. Natl. Acad. Sci. U.S.A.">
        <title>Complete genomes of two clinical Staphylococcus aureus strains: evidence for the rapid evolution of virulence and drug resistance.</title>
        <authorList>
            <person name="Holden M.T.G."/>
            <person name="Feil E.J."/>
            <person name="Lindsay J.A."/>
            <person name="Peacock S.J."/>
            <person name="Day N.P.J."/>
            <person name="Enright M.C."/>
            <person name="Foster T.J."/>
            <person name="Moore C.E."/>
            <person name="Hurst L."/>
            <person name="Atkin R."/>
            <person name="Barron A."/>
            <person name="Bason N."/>
            <person name="Bentley S.D."/>
            <person name="Chillingworth C."/>
            <person name="Chillingworth T."/>
            <person name="Churcher C."/>
            <person name="Clark L."/>
            <person name="Corton C."/>
            <person name="Cronin A."/>
            <person name="Doggett J."/>
            <person name="Dowd L."/>
            <person name="Feltwell T."/>
            <person name="Hance Z."/>
            <person name="Harris B."/>
            <person name="Hauser H."/>
            <person name="Holroyd S."/>
            <person name="Jagels K."/>
            <person name="James K.D."/>
            <person name="Lennard N."/>
            <person name="Line A."/>
            <person name="Mayes R."/>
            <person name="Moule S."/>
            <person name="Mungall K."/>
            <person name="Ormond D."/>
            <person name="Quail M.A."/>
            <person name="Rabbinowitsch E."/>
            <person name="Rutherford K.M."/>
            <person name="Sanders M."/>
            <person name="Sharp S."/>
            <person name="Simmonds M."/>
            <person name="Stevens K."/>
            <person name="Whitehead S."/>
            <person name="Barrell B.G."/>
            <person name="Spratt B.G."/>
            <person name="Parkhill J."/>
        </authorList>
    </citation>
    <scope>NUCLEOTIDE SEQUENCE [LARGE SCALE GENOMIC DNA]</scope>
    <source>
        <strain>MSSA476</strain>
    </source>
</reference>
<name>RL32_STAAS</name>
<comment type="similarity">
    <text evidence="1">Belongs to the bacterial ribosomal protein bL32 family.</text>
</comment>
<organism>
    <name type="scientific">Staphylococcus aureus (strain MSSA476)</name>
    <dbReference type="NCBI Taxonomy" id="282459"/>
    <lineage>
        <taxon>Bacteria</taxon>
        <taxon>Bacillati</taxon>
        <taxon>Bacillota</taxon>
        <taxon>Bacilli</taxon>
        <taxon>Bacillales</taxon>
        <taxon>Staphylococcaceae</taxon>
        <taxon>Staphylococcus</taxon>
    </lineage>
</organism>
<protein>
    <recommendedName>
        <fullName evidence="1">Large ribosomal subunit protein bL32</fullName>
    </recommendedName>
    <alternativeName>
        <fullName evidence="2">50S ribosomal protein L32</fullName>
    </alternativeName>
</protein>
<keyword id="KW-0687">Ribonucleoprotein</keyword>
<keyword id="KW-0689">Ribosomal protein</keyword>
<gene>
    <name evidence="1" type="primary">rpmF</name>
    <name type="ordered locus">SAS1062</name>
</gene>
<dbReference type="EMBL" id="BX571857">
    <property type="protein sequence ID" value="CAG42836.1"/>
    <property type="molecule type" value="Genomic_DNA"/>
</dbReference>
<dbReference type="RefSeq" id="WP_000290472.1">
    <property type="nucleotide sequence ID" value="NC_002953.3"/>
</dbReference>
<dbReference type="SMR" id="Q6GA87"/>
<dbReference type="GeneID" id="98345444"/>
<dbReference type="KEGG" id="sas:SAS1062"/>
<dbReference type="HOGENOM" id="CLU_129084_1_3_9"/>
<dbReference type="GO" id="GO:0015934">
    <property type="term" value="C:large ribosomal subunit"/>
    <property type="evidence" value="ECO:0007669"/>
    <property type="project" value="InterPro"/>
</dbReference>
<dbReference type="GO" id="GO:0003735">
    <property type="term" value="F:structural constituent of ribosome"/>
    <property type="evidence" value="ECO:0007669"/>
    <property type="project" value="InterPro"/>
</dbReference>
<dbReference type="GO" id="GO:0006412">
    <property type="term" value="P:translation"/>
    <property type="evidence" value="ECO:0007669"/>
    <property type="project" value="UniProtKB-UniRule"/>
</dbReference>
<dbReference type="Gene3D" id="1.20.5.640">
    <property type="entry name" value="Single helix bin"/>
    <property type="match status" value="1"/>
</dbReference>
<dbReference type="HAMAP" id="MF_00340">
    <property type="entry name" value="Ribosomal_bL32"/>
    <property type="match status" value="1"/>
</dbReference>
<dbReference type="InterPro" id="IPR002677">
    <property type="entry name" value="Ribosomal_bL32"/>
</dbReference>
<dbReference type="InterPro" id="IPR044957">
    <property type="entry name" value="Ribosomal_bL32_bact"/>
</dbReference>
<dbReference type="InterPro" id="IPR011332">
    <property type="entry name" value="Ribosomal_zn-bd"/>
</dbReference>
<dbReference type="NCBIfam" id="TIGR01031">
    <property type="entry name" value="rpmF_bact"/>
    <property type="match status" value="1"/>
</dbReference>
<dbReference type="PANTHER" id="PTHR35534">
    <property type="entry name" value="50S RIBOSOMAL PROTEIN L32"/>
    <property type="match status" value="1"/>
</dbReference>
<dbReference type="PANTHER" id="PTHR35534:SF2">
    <property type="entry name" value="LARGE RIBOSOMAL SUBUNIT PROTEIN BL32"/>
    <property type="match status" value="1"/>
</dbReference>
<dbReference type="Pfam" id="PF01783">
    <property type="entry name" value="Ribosomal_L32p"/>
    <property type="match status" value="1"/>
</dbReference>
<dbReference type="SUPFAM" id="SSF57829">
    <property type="entry name" value="Zn-binding ribosomal proteins"/>
    <property type="match status" value="1"/>
</dbReference>
<feature type="chain" id="PRO_0000172406" description="Large ribosomal subunit protein bL32">
    <location>
        <begin position="1"/>
        <end position="57"/>
    </location>
</feature>
<evidence type="ECO:0000255" key="1">
    <source>
        <dbReference type="HAMAP-Rule" id="MF_00340"/>
    </source>
</evidence>
<evidence type="ECO:0000305" key="2"/>